<protein>
    <recommendedName>
        <fullName>Flagellar hook-associated protein 3</fullName>
        <shortName>HAP3</shortName>
    </recommendedName>
    <alternativeName>
        <fullName>Hook-filament junction protein</fullName>
    </alternativeName>
</protein>
<feature type="chain" id="PRO_0000182662" description="Flagellar hook-associated protein 3">
    <location>
        <begin position="1"/>
        <end position="317"/>
    </location>
</feature>
<feature type="helix" evidence="2">
    <location>
        <begin position="51"/>
        <end position="96"/>
    </location>
</feature>
<feature type="helix" evidence="2">
    <location>
        <begin position="104"/>
        <end position="125"/>
    </location>
</feature>
<feature type="turn" evidence="2">
    <location>
        <begin position="148"/>
        <end position="150"/>
    </location>
</feature>
<feature type="strand" evidence="2">
    <location>
        <begin position="160"/>
        <end position="163"/>
    </location>
</feature>
<feature type="strand" evidence="2">
    <location>
        <begin position="165"/>
        <end position="167"/>
    </location>
</feature>
<feature type="strand" evidence="2">
    <location>
        <begin position="169"/>
        <end position="173"/>
    </location>
</feature>
<feature type="helix" evidence="2">
    <location>
        <begin position="176"/>
        <end position="180"/>
    </location>
</feature>
<feature type="helix" evidence="2">
    <location>
        <begin position="200"/>
        <end position="211"/>
    </location>
</feature>
<feature type="helix" evidence="2">
    <location>
        <begin position="219"/>
        <end position="261"/>
    </location>
</feature>
<proteinExistence type="evidence at protein level"/>
<comment type="subcellular location">
    <subcellularLocation>
        <location>Secreted</location>
    </subcellularLocation>
    <subcellularLocation>
        <location>Bacterial flagellum</location>
    </subcellularLocation>
</comment>
<comment type="similarity">
    <text evidence="1">Belongs to the bacterial flagellin family.</text>
</comment>
<organism>
    <name type="scientific">Salmonella typhimurium (strain LT2 / SGSC1412 / ATCC 700720)</name>
    <dbReference type="NCBI Taxonomy" id="99287"/>
    <lineage>
        <taxon>Bacteria</taxon>
        <taxon>Pseudomonadati</taxon>
        <taxon>Pseudomonadota</taxon>
        <taxon>Gammaproteobacteria</taxon>
        <taxon>Enterobacterales</taxon>
        <taxon>Enterobacteriaceae</taxon>
        <taxon>Salmonella</taxon>
    </lineage>
</organism>
<gene>
    <name type="primary">flgL</name>
    <name type="synonym">flaT</name>
    <name type="synonym">flaU</name>
    <name type="ordered locus">STM1184</name>
</gene>
<sequence length="317" mass="34175">MRISTQMMYEQNMSGITNSQAEWMKLGEQMSTGKRVTNPSDDPIAASQAVVLSQAQAQNSQYALARTFATQKVSLEESVLSQVTTAIQTAQEKIVYAGNGTLSDDDRASLATDLQGIRDQLMNLANSTDGNGRYIFAGYKTEAAPFDQATGGYHGGEKSVTQQVDSARTMVIGHTGAQIFNSITSNAVPEPDGSDSEKNLFVMLDTAIAALKTPVEGNNVEKEKAAAAIDKTNRGLKNSLNNVLTVRAELGTQLSELSTLDSLGSDRALGQKLQMSNLVDVDWNSVISSYVMQQAALQASYKTFTDMQGMSLFQLNR</sequence>
<name>FLGL_SALTY</name>
<reference key="1">
    <citation type="journal article" date="1990" name="J. Mol. Biol.">
        <title>Flagellar hook and hook-associated proteins of Salmonella typhimurium and their relationship to other axial components of the flagellum.</title>
        <authorList>
            <person name="Homma M."/>
            <person name="Derosier D.J."/>
            <person name="Macnab R.M."/>
        </authorList>
    </citation>
    <scope>NUCLEOTIDE SEQUENCE [GENOMIC DNA]</scope>
</reference>
<reference key="2">
    <citation type="journal article" date="2001" name="Nature">
        <title>Complete genome sequence of Salmonella enterica serovar Typhimurium LT2.</title>
        <authorList>
            <person name="McClelland M."/>
            <person name="Sanderson K.E."/>
            <person name="Spieth J."/>
            <person name="Clifton S.W."/>
            <person name="Latreille P."/>
            <person name="Courtney L."/>
            <person name="Porwollik S."/>
            <person name="Ali J."/>
            <person name="Dante M."/>
            <person name="Du F."/>
            <person name="Hou S."/>
            <person name="Layman D."/>
            <person name="Leonard S."/>
            <person name="Nguyen C."/>
            <person name="Scott K."/>
            <person name="Holmes A."/>
            <person name="Grewal N."/>
            <person name="Mulvaney E."/>
            <person name="Ryan E."/>
            <person name="Sun H."/>
            <person name="Florea L."/>
            <person name="Miller W."/>
            <person name="Stoneking T."/>
            <person name="Nhan M."/>
            <person name="Waterston R."/>
            <person name="Wilson R.K."/>
        </authorList>
    </citation>
    <scope>NUCLEOTIDE SEQUENCE [LARGE SCALE GENOMIC DNA]</scope>
    <source>
        <strain>LT2 / SGSC1412 / ATCC 700720</strain>
    </source>
</reference>
<dbReference type="EMBL" id="X51739">
    <property type="protein sequence ID" value="CAA36028.1"/>
    <property type="molecule type" value="Genomic_DNA"/>
</dbReference>
<dbReference type="EMBL" id="AE006468">
    <property type="protein sequence ID" value="AAL20114.1"/>
    <property type="molecule type" value="Genomic_DNA"/>
</dbReference>
<dbReference type="PIR" id="S10362">
    <property type="entry name" value="S10362"/>
</dbReference>
<dbReference type="RefSeq" id="NP_460155.1">
    <property type="nucleotide sequence ID" value="NC_003197.2"/>
</dbReference>
<dbReference type="RefSeq" id="WP_001223033.1">
    <property type="nucleotide sequence ID" value="NC_003197.2"/>
</dbReference>
<dbReference type="PDB" id="2D4X">
    <property type="method" value="X-ray"/>
    <property type="resolution" value="1.90 A"/>
    <property type="chains" value="A=40-286"/>
</dbReference>
<dbReference type="PDBsum" id="2D4X"/>
<dbReference type="SMR" id="P16326"/>
<dbReference type="DIP" id="DIP-61314N"/>
<dbReference type="IntAct" id="P16326">
    <property type="interactions" value="1"/>
</dbReference>
<dbReference type="STRING" id="99287.STM1184"/>
<dbReference type="PaxDb" id="99287-STM1184"/>
<dbReference type="GeneID" id="1252702"/>
<dbReference type="KEGG" id="stm:STM1184"/>
<dbReference type="PATRIC" id="fig|99287.12.peg.1252"/>
<dbReference type="HOGENOM" id="CLU_024437_5_0_6"/>
<dbReference type="OMA" id="MRVTQGM"/>
<dbReference type="PhylomeDB" id="P16326"/>
<dbReference type="BioCyc" id="SENT99287:STM1184-MONOMER"/>
<dbReference type="EvolutionaryTrace" id="P16326"/>
<dbReference type="Proteomes" id="UP000001014">
    <property type="component" value="Chromosome"/>
</dbReference>
<dbReference type="GO" id="GO:0009424">
    <property type="term" value="C:bacterial-type flagellum hook"/>
    <property type="evidence" value="ECO:0007669"/>
    <property type="project" value="InterPro"/>
</dbReference>
<dbReference type="GO" id="GO:0005576">
    <property type="term" value="C:extracellular region"/>
    <property type="evidence" value="ECO:0007669"/>
    <property type="project" value="UniProtKB-SubCell"/>
</dbReference>
<dbReference type="GO" id="GO:0005198">
    <property type="term" value="F:structural molecule activity"/>
    <property type="evidence" value="ECO:0007669"/>
    <property type="project" value="InterPro"/>
</dbReference>
<dbReference type="GO" id="GO:0071973">
    <property type="term" value="P:bacterial-type flagellum-dependent cell motility"/>
    <property type="evidence" value="ECO:0007669"/>
    <property type="project" value="InterPro"/>
</dbReference>
<dbReference type="Gene3D" id="1.20.1330.10">
    <property type="entry name" value="f41 fragment of flagellin, N-terminal domain"/>
    <property type="match status" value="1"/>
</dbReference>
<dbReference type="InterPro" id="IPR013384">
    <property type="entry name" value="Flagell_FlgL"/>
</dbReference>
<dbReference type="InterPro" id="IPR001492">
    <property type="entry name" value="Flagellin"/>
</dbReference>
<dbReference type="InterPro" id="IPR001029">
    <property type="entry name" value="Flagellin_N"/>
</dbReference>
<dbReference type="NCBIfam" id="TIGR02550">
    <property type="entry name" value="flagell_flgL"/>
    <property type="match status" value="1"/>
</dbReference>
<dbReference type="PANTHER" id="PTHR42792:SF1">
    <property type="entry name" value="FLAGELLAR HOOK-ASSOCIATED PROTEIN 3"/>
    <property type="match status" value="1"/>
</dbReference>
<dbReference type="PANTHER" id="PTHR42792">
    <property type="entry name" value="FLAGELLIN"/>
    <property type="match status" value="1"/>
</dbReference>
<dbReference type="Pfam" id="PF00669">
    <property type="entry name" value="Flagellin_N"/>
    <property type="match status" value="1"/>
</dbReference>
<dbReference type="SUPFAM" id="SSF64518">
    <property type="entry name" value="Phase 1 flagellin"/>
    <property type="match status" value="1"/>
</dbReference>
<keyword id="KW-0002">3D-structure</keyword>
<keyword id="KW-0975">Bacterial flagellum</keyword>
<keyword id="KW-1185">Reference proteome</keyword>
<keyword id="KW-0964">Secreted</keyword>
<accession>P16326</accession>
<evidence type="ECO:0000305" key="1"/>
<evidence type="ECO:0007829" key="2">
    <source>
        <dbReference type="PDB" id="2D4X"/>
    </source>
</evidence>